<reference key="1">
    <citation type="submission" date="2007-06" db="EMBL/GenBank/DDBJ databases">
        <title>Complete sequence of Marinomonas sp. MWYL1.</title>
        <authorList>
            <consortium name="US DOE Joint Genome Institute"/>
            <person name="Copeland A."/>
            <person name="Lucas S."/>
            <person name="Lapidus A."/>
            <person name="Barry K."/>
            <person name="Glavina del Rio T."/>
            <person name="Dalin E."/>
            <person name="Tice H."/>
            <person name="Pitluck S."/>
            <person name="Kiss H."/>
            <person name="Brettin T."/>
            <person name="Bruce D."/>
            <person name="Detter J.C."/>
            <person name="Han C."/>
            <person name="Schmutz J."/>
            <person name="Larimer F."/>
            <person name="Land M."/>
            <person name="Hauser L."/>
            <person name="Kyrpides N."/>
            <person name="Kim E."/>
            <person name="Johnston A.W.B."/>
            <person name="Todd J.D."/>
            <person name="Rogers R."/>
            <person name="Wexler M."/>
            <person name="Bond P.L."/>
            <person name="Li Y."/>
            <person name="Richardson P."/>
        </authorList>
    </citation>
    <scope>NUCLEOTIDE SEQUENCE [LARGE SCALE GENOMIC DNA]</scope>
    <source>
        <strain>MWYL1</strain>
    </source>
</reference>
<organism>
    <name type="scientific">Marinomonas sp. (strain MWYL1)</name>
    <dbReference type="NCBI Taxonomy" id="400668"/>
    <lineage>
        <taxon>Bacteria</taxon>
        <taxon>Pseudomonadati</taxon>
        <taxon>Pseudomonadota</taxon>
        <taxon>Gammaproteobacteria</taxon>
        <taxon>Oceanospirillales</taxon>
        <taxon>Oceanospirillaceae</taxon>
        <taxon>Marinomonas</taxon>
    </lineage>
</organism>
<keyword id="KW-0067">ATP-binding</keyword>
<keyword id="KW-0143">Chaperone</keyword>
<keyword id="KW-0963">Cytoplasm</keyword>
<keyword id="KW-0413">Isomerase</keyword>
<keyword id="KW-0547">Nucleotide-binding</keyword>
<accession>A6VWY0</accession>
<protein>
    <recommendedName>
        <fullName evidence="1">Chaperonin GroEL</fullName>
        <ecNumber evidence="1">5.6.1.7</ecNumber>
    </recommendedName>
    <alternativeName>
        <fullName evidence="1">60 kDa chaperonin</fullName>
    </alternativeName>
    <alternativeName>
        <fullName evidence="1">Chaperonin-60</fullName>
        <shortName evidence="1">Cpn60</shortName>
    </alternativeName>
</protein>
<gene>
    <name evidence="1" type="primary">groEL</name>
    <name evidence="1" type="synonym">groL</name>
    <name type="ordered locus">Mmwyl1_2037</name>
</gene>
<sequence>MAAKEVKFGDSARQQMLKGVNVLADAVKVTLGPKGRNVIIEKSYGAPLVTKDGVTVAKEIELENKFENMGAQMVKEVASQANDVAGDGTTTATVLAQAIVAEGLKAVAAGRNPMDLKRGIDQAAAAVVKEIAAQSTPCTDTRAIEQVGTISANSDSSVGRIIAEAMERVGKEGVITVEEGSGFEDELAVVEGMQFDRGYLSPYFINNQETMSAELENPFILLVDKKISNIRDLLPVLEGVAKASRPLLIIAEDVEGEALATLVVNTMRGIVKVAAAKAPGFGDRRKAMLEDIAVLSGATVISEEVGLSLETATLDQLGTAKRVTLTKESTTIVDGAGNAANITSRVEQIRAEIANSSSDYDKEKLQERVAKLAGGVAVIKIGAATELAMKEKKARVDDALHATRAAVEEGVVAGGGVALVRALTKIVDLKGENEDQSVGITLALRAMEAPMRQIVINAGAEASVVVDKVKQGEGNFGYNAATGEYGDMLEMGILDPAKVTRSALQAAASVAGLMITTEAMIADLPKDDAGMPDMGGMGGMGGMGGMM</sequence>
<evidence type="ECO:0000255" key="1">
    <source>
        <dbReference type="HAMAP-Rule" id="MF_00600"/>
    </source>
</evidence>
<proteinExistence type="inferred from homology"/>
<feature type="chain" id="PRO_1000082478" description="Chaperonin GroEL">
    <location>
        <begin position="1"/>
        <end position="547"/>
    </location>
</feature>
<feature type="binding site" evidence="1">
    <location>
        <begin position="30"/>
        <end position="33"/>
    </location>
    <ligand>
        <name>ATP</name>
        <dbReference type="ChEBI" id="CHEBI:30616"/>
    </ligand>
</feature>
<feature type="binding site" evidence="1">
    <location>
        <position position="51"/>
    </location>
    <ligand>
        <name>ATP</name>
        <dbReference type="ChEBI" id="CHEBI:30616"/>
    </ligand>
</feature>
<feature type="binding site" evidence="1">
    <location>
        <begin position="87"/>
        <end position="91"/>
    </location>
    <ligand>
        <name>ATP</name>
        <dbReference type="ChEBI" id="CHEBI:30616"/>
    </ligand>
</feature>
<feature type="binding site" evidence="1">
    <location>
        <position position="415"/>
    </location>
    <ligand>
        <name>ATP</name>
        <dbReference type="ChEBI" id="CHEBI:30616"/>
    </ligand>
</feature>
<feature type="binding site" evidence="1">
    <location>
        <begin position="479"/>
        <end position="481"/>
    </location>
    <ligand>
        <name>ATP</name>
        <dbReference type="ChEBI" id="CHEBI:30616"/>
    </ligand>
</feature>
<feature type="binding site" evidence="1">
    <location>
        <position position="495"/>
    </location>
    <ligand>
        <name>ATP</name>
        <dbReference type="ChEBI" id="CHEBI:30616"/>
    </ligand>
</feature>
<comment type="function">
    <text evidence="1">Together with its co-chaperonin GroES, plays an essential role in assisting protein folding. The GroEL-GroES system forms a nano-cage that allows encapsulation of the non-native substrate proteins and provides a physical environment optimized to promote and accelerate protein folding.</text>
</comment>
<comment type="catalytic activity">
    <reaction evidence="1">
        <text>ATP + H2O + a folded polypeptide = ADP + phosphate + an unfolded polypeptide.</text>
        <dbReference type="EC" id="5.6.1.7"/>
    </reaction>
</comment>
<comment type="subunit">
    <text evidence="1">Forms a cylinder of 14 subunits composed of two heptameric rings stacked back-to-back. Interacts with the co-chaperonin GroES.</text>
</comment>
<comment type="subcellular location">
    <subcellularLocation>
        <location evidence="1">Cytoplasm</location>
    </subcellularLocation>
</comment>
<comment type="similarity">
    <text evidence="1">Belongs to the chaperonin (HSP60) family.</text>
</comment>
<name>CH60_MARMS</name>
<dbReference type="EC" id="5.6.1.7" evidence="1"/>
<dbReference type="EMBL" id="CP000749">
    <property type="protein sequence ID" value="ABR70959.1"/>
    <property type="molecule type" value="Genomic_DNA"/>
</dbReference>
<dbReference type="SMR" id="A6VWY0"/>
<dbReference type="STRING" id="400668.Mmwyl1_2037"/>
<dbReference type="KEGG" id="mmw:Mmwyl1_2037"/>
<dbReference type="eggNOG" id="COG0459">
    <property type="taxonomic scope" value="Bacteria"/>
</dbReference>
<dbReference type="HOGENOM" id="CLU_016503_3_0_6"/>
<dbReference type="OrthoDB" id="9766614at2"/>
<dbReference type="GO" id="GO:0005737">
    <property type="term" value="C:cytoplasm"/>
    <property type="evidence" value="ECO:0007669"/>
    <property type="project" value="UniProtKB-SubCell"/>
</dbReference>
<dbReference type="GO" id="GO:0005524">
    <property type="term" value="F:ATP binding"/>
    <property type="evidence" value="ECO:0007669"/>
    <property type="project" value="UniProtKB-UniRule"/>
</dbReference>
<dbReference type="GO" id="GO:0140662">
    <property type="term" value="F:ATP-dependent protein folding chaperone"/>
    <property type="evidence" value="ECO:0007669"/>
    <property type="project" value="InterPro"/>
</dbReference>
<dbReference type="GO" id="GO:0016853">
    <property type="term" value="F:isomerase activity"/>
    <property type="evidence" value="ECO:0007669"/>
    <property type="project" value="UniProtKB-KW"/>
</dbReference>
<dbReference type="GO" id="GO:0051082">
    <property type="term" value="F:unfolded protein binding"/>
    <property type="evidence" value="ECO:0007669"/>
    <property type="project" value="UniProtKB-UniRule"/>
</dbReference>
<dbReference type="GO" id="GO:0042026">
    <property type="term" value="P:protein refolding"/>
    <property type="evidence" value="ECO:0007669"/>
    <property type="project" value="UniProtKB-UniRule"/>
</dbReference>
<dbReference type="CDD" id="cd03344">
    <property type="entry name" value="GroEL"/>
    <property type="match status" value="1"/>
</dbReference>
<dbReference type="FunFam" id="1.10.560.10:FF:000001">
    <property type="entry name" value="60 kDa chaperonin"/>
    <property type="match status" value="1"/>
</dbReference>
<dbReference type="FunFam" id="3.50.7.10:FF:000001">
    <property type="entry name" value="60 kDa chaperonin"/>
    <property type="match status" value="1"/>
</dbReference>
<dbReference type="Gene3D" id="3.50.7.10">
    <property type="entry name" value="GroEL"/>
    <property type="match status" value="1"/>
</dbReference>
<dbReference type="Gene3D" id="1.10.560.10">
    <property type="entry name" value="GroEL-like equatorial domain"/>
    <property type="match status" value="1"/>
</dbReference>
<dbReference type="Gene3D" id="3.30.260.10">
    <property type="entry name" value="TCP-1-like chaperonin intermediate domain"/>
    <property type="match status" value="1"/>
</dbReference>
<dbReference type="HAMAP" id="MF_00600">
    <property type="entry name" value="CH60"/>
    <property type="match status" value="1"/>
</dbReference>
<dbReference type="InterPro" id="IPR018370">
    <property type="entry name" value="Chaperonin_Cpn60_CS"/>
</dbReference>
<dbReference type="InterPro" id="IPR001844">
    <property type="entry name" value="Cpn60/GroEL"/>
</dbReference>
<dbReference type="InterPro" id="IPR002423">
    <property type="entry name" value="Cpn60/GroEL/TCP-1"/>
</dbReference>
<dbReference type="InterPro" id="IPR027409">
    <property type="entry name" value="GroEL-like_apical_dom_sf"/>
</dbReference>
<dbReference type="InterPro" id="IPR027413">
    <property type="entry name" value="GROEL-like_equatorial_sf"/>
</dbReference>
<dbReference type="InterPro" id="IPR027410">
    <property type="entry name" value="TCP-1-like_intermed_sf"/>
</dbReference>
<dbReference type="NCBIfam" id="TIGR02348">
    <property type="entry name" value="GroEL"/>
    <property type="match status" value="1"/>
</dbReference>
<dbReference type="NCBIfam" id="NF000592">
    <property type="entry name" value="PRK00013.1"/>
    <property type="match status" value="1"/>
</dbReference>
<dbReference type="NCBIfam" id="NF009487">
    <property type="entry name" value="PRK12849.1"/>
    <property type="match status" value="1"/>
</dbReference>
<dbReference type="NCBIfam" id="NF009488">
    <property type="entry name" value="PRK12850.1"/>
    <property type="match status" value="1"/>
</dbReference>
<dbReference type="NCBIfam" id="NF009489">
    <property type="entry name" value="PRK12851.1"/>
    <property type="match status" value="1"/>
</dbReference>
<dbReference type="PANTHER" id="PTHR45633">
    <property type="entry name" value="60 KDA HEAT SHOCK PROTEIN, MITOCHONDRIAL"/>
    <property type="match status" value="1"/>
</dbReference>
<dbReference type="Pfam" id="PF00118">
    <property type="entry name" value="Cpn60_TCP1"/>
    <property type="match status" value="1"/>
</dbReference>
<dbReference type="PRINTS" id="PR00298">
    <property type="entry name" value="CHAPERONIN60"/>
</dbReference>
<dbReference type="SUPFAM" id="SSF52029">
    <property type="entry name" value="GroEL apical domain-like"/>
    <property type="match status" value="1"/>
</dbReference>
<dbReference type="SUPFAM" id="SSF48592">
    <property type="entry name" value="GroEL equatorial domain-like"/>
    <property type="match status" value="1"/>
</dbReference>
<dbReference type="SUPFAM" id="SSF54849">
    <property type="entry name" value="GroEL-intermediate domain like"/>
    <property type="match status" value="1"/>
</dbReference>
<dbReference type="PROSITE" id="PS00296">
    <property type="entry name" value="CHAPERONINS_CPN60"/>
    <property type="match status" value="1"/>
</dbReference>